<proteinExistence type="inferred from homology"/>
<protein>
    <recommendedName>
        <fullName evidence="1">Na(+)/H(+) antiporter NhaA</fullName>
    </recommendedName>
    <alternativeName>
        <fullName evidence="1">Sodium/proton antiporter NhaA</fullName>
    </alternativeName>
</protein>
<feature type="chain" id="PRO_0000334315" description="Na(+)/H(+) antiporter NhaA">
    <location>
        <begin position="1"/>
        <end position="400"/>
    </location>
</feature>
<feature type="transmembrane region" description="Helical" evidence="1">
    <location>
        <begin position="26"/>
        <end position="46"/>
    </location>
</feature>
<feature type="transmembrane region" description="Helical" evidence="1">
    <location>
        <begin position="71"/>
        <end position="91"/>
    </location>
</feature>
<feature type="transmembrane region" description="Helical" evidence="1">
    <location>
        <begin position="107"/>
        <end position="127"/>
    </location>
</feature>
<feature type="transmembrane region" description="Helical" evidence="1">
    <location>
        <begin position="137"/>
        <end position="157"/>
    </location>
</feature>
<feature type="transmembrane region" description="Helical" evidence="1">
    <location>
        <begin position="166"/>
        <end position="186"/>
    </location>
</feature>
<feature type="transmembrane region" description="Helical" evidence="1">
    <location>
        <begin position="189"/>
        <end position="209"/>
    </location>
</feature>
<feature type="transmembrane region" description="Helical" evidence="1">
    <location>
        <begin position="212"/>
        <end position="232"/>
    </location>
</feature>
<feature type="transmembrane region" description="Helical" evidence="1">
    <location>
        <begin position="233"/>
        <end position="253"/>
    </location>
</feature>
<feature type="transmembrane region" description="Helical" evidence="1">
    <location>
        <begin position="273"/>
        <end position="293"/>
    </location>
</feature>
<feature type="transmembrane region" description="Helical" evidence="1">
    <location>
        <begin position="299"/>
        <end position="319"/>
    </location>
</feature>
<feature type="transmembrane region" description="Helical" evidence="1">
    <location>
        <begin position="340"/>
        <end position="360"/>
    </location>
</feature>
<feature type="transmembrane region" description="Helical" evidence="1">
    <location>
        <begin position="373"/>
        <end position="393"/>
    </location>
</feature>
<keyword id="KW-0050">Antiport</keyword>
<keyword id="KW-0997">Cell inner membrane</keyword>
<keyword id="KW-1003">Cell membrane</keyword>
<keyword id="KW-0406">Ion transport</keyword>
<keyword id="KW-0472">Membrane</keyword>
<keyword id="KW-0915">Sodium</keyword>
<keyword id="KW-0739">Sodium transport</keyword>
<keyword id="KW-0812">Transmembrane</keyword>
<keyword id="KW-1133">Transmembrane helix</keyword>
<keyword id="KW-0813">Transport</keyword>
<gene>
    <name evidence="1" type="primary">nhaA</name>
    <name type="ordered locus">CGSHiGG_03755</name>
</gene>
<evidence type="ECO:0000255" key="1">
    <source>
        <dbReference type="HAMAP-Rule" id="MF_01844"/>
    </source>
</evidence>
<reference key="1">
    <citation type="journal article" date="2007" name="Genome Biol.">
        <title>Characterization and modeling of the Haemophilus influenzae core and supragenomes based on the complete genomic sequences of Rd and 12 clinical nontypeable strains.</title>
        <authorList>
            <person name="Hogg J.S."/>
            <person name="Hu F.Z."/>
            <person name="Janto B."/>
            <person name="Boissy R."/>
            <person name="Hayes J."/>
            <person name="Keefe R."/>
            <person name="Post J.C."/>
            <person name="Ehrlich G.D."/>
        </authorList>
    </citation>
    <scope>NUCLEOTIDE SEQUENCE [LARGE SCALE GENOMIC DNA]</scope>
    <source>
        <strain>PittGG</strain>
    </source>
</reference>
<name>NHAA_HAEIG</name>
<comment type="function">
    <text evidence="1">Na(+)/H(+) antiporter that extrudes sodium in exchange for external protons.</text>
</comment>
<comment type="catalytic activity">
    <reaction evidence="1">
        <text>Na(+)(in) + 2 H(+)(out) = Na(+)(out) + 2 H(+)(in)</text>
        <dbReference type="Rhea" id="RHEA:29251"/>
        <dbReference type="ChEBI" id="CHEBI:15378"/>
        <dbReference type="ChEBI" id="CHEBI:29101"/>
    </reaction>
    <physiologicalReaction direction="left-to-right" evidence="1">
        <dbReference type="Rhea" id="RHEA:29252"/>
    </physiologicalReaction>
</comment>
<comment type="subcellular location">
    <subcellularLocation>
        <location evidence="1">Cell inner membrane</location>
        <topology evidence="1">Multi-pass membrane protein</topology>
    </subcellularLocation>
</comment>
<comment type="similarity">
    <text evidence="1">Belongs to the NhaA Na(+)/H(+) (TC 2.A.33) antiporter family.</text>
</comment>
<sequence>MNFLLCIFKGVYVIKLIQRFFKLESAGGILLLFSAVVAMLLANSPLSNQYNDFLNLPVSLQIGSFSINKTLIHWINDGFMAVFFVLVGMEVKKELFEGALSTYQQAIFPAIAAIGGMVIPAVVYWFIAKQDPSLANGWAIPMATDIAFALGIMALLSKQVPLPLKIFLLALAIIDDLGAIVVIALFFSHGLSVQALIFSAVAIIALILLNRFKVSALCAYMVVGAILWASVLKSGVHATLAGVIIGFSIPLKGKKGERPLDDFEHILSSWSSFVILPLFAFANAGVSFAGIDVNMISSPLLLAIASGLIIGKPVGIFGFSYISVKLGLAKLPDGINFKQIFAVAVLCGIGFTMSMFLASLAFDANAGESVNTLSRLGILLGSTVSAILGYLFLKQTTKLS</sequence>
<dbReference type="EMBL" id="CP000672">
    <property type="protein sequence ID" value="ABQ99735.1"/>
    <property type="molecule type" value="Genomic_DNA"/>
</dbReference>
<dbReference type="SMR" id="A5UG30"/>
<dbReference type="KEGG" id="hiq:CGSHiGG_03755"/>
<dbReference type="HOGENOM" id="CLU_015803_1_0_6"/>
<dbReference type="Proteomes" id="UP000001990">
    <property type="component" value="Chromosome"/>
</dbReference>
<dbReference type="GO" id="GO:0005886">
    <property type="term" value="C:plasma membrane"/>
    <property type="evidence" value="ECO:0007669"/>
    <property type="project" value="UniProtKB-SubCell"/>
</dbReference>
<dbReference type="GO" id="GO:0015385">
    <property type="term" value="F:sodium:proton antiporter activity"/>
    <property type="evidence" value="ECO:0007669"/>
    <property type="project" value="TreeGrafter"/>
</dbReference>
<dbReference type="GO" id="GO:0006885">
    <property type="term" value="P:regulation of pH"/>
    <property type="evidence" value="ECO:0007669"/>
    <property type="project" value="InterPro"/>
</dbReference>
<dbReference type="Gene3D" id="1.20.1530.10">
    <property type="entry name" value="Na+/H+ antiporter like domain"/>
    <property type="match status" value="1"/>
</dbReference>
<dbReference type="HAMAP" id="MF_01844">
    <property type="entry name" value="NhaA"/>
    <property type="match status" value="1"/>
</dbReference>
<dbReference type="InterPro" id="IPR023171">
    <property type="entry name" value="Na/H_antiporter_dom_sf"/>
</dbReference>
<dbReference type="InterPro" id="IPR004670">
    <property type="entry name" value="NhaA"/>
</dbReference>
<dbReference type="NCBIfam" id="TIGR00773">
    <property type="entry name" value="NhaA"/>
    <property type="match status" value="1"/>
</dbReference>
<dbReference type="NCBIfam" id="NF007111">
    <property type="entry name" value="PRK09560.1"/>
    <property type="match status" value="1"/>
</dbReference>
<dbReference type="NCBIfam" id="NF007112">
    <property type="entry name" value="PRK09561.1"/>
    <property type="match status" value="1"/>
</dbReference>
<dbReference type="PANTHER" id="PTHR30341:SF0">
    <property type="entry name" value="NA(+)_H(+) ANTIPORTER NHAA"/>
    <property type="match status" value="1"/>
</dbReference>
<dbReference type="PANTHER" id="PTHR30341">
    <property type="entry name" value="SODIUM ION/PROTON ANTIPORTER NHAA-RELATED"/>
    <property type="match status" value="1"/>
</dbReference>
<dbReference type="Pfam" id="PF06965">
    <property type="entry name" value="Na_H_antiport_1"/>
    <property type="match status" value="1"/>
</dbReference>
<accession>A5UG30</accession>
<organism>
    <name type="scientific">Haemophilus influenzae (strain PittGG)</name>
    <dbReference type="NCBI Taxonomy" id="374931"/>
    <lineage>
        <taxon>Bacteria</taxon>
        <taxon>Pseudomonadati</taxon>
        <taxon>Pseudomonadota</taxon>
        <taxon>Gammaproteobacteria</taxon>
        <taxon>Pasteurellales</taxon>
        <taxon>Pasteurellaceae</taxon>
        <taxon>Haemophilus</taxon>
    </lineage>
</organism>